<proteinExistence type="inferred from homology"/>
<keyword id="KW-0131">Cell cycle</keyword>
<keyword id="KW-0132">Cell division</keyword>
<keyword id="KW-0574">Periplasm</keyword>
<keyword id="KW-1185">Reference proteome</keyword>
<keyword id="KW-0732">Signal</keyword>
<evidence type="ECO:0000255" key="1">
    <source>
        <dbReference type="HAMAP-Rule" id="MF_00671"/>
    </source>
</evidence>
<reference key="1">
    <citation type="journal article" date="2009" name="Proc. Natl. Acad. Sci. U.S.A.">
        <title>The genomic basis of trophic strategy in marine bacteria.</title>
        <authorList>
            <person name="Lauro F.M."/>
            <person name="McDougald D."/>
            <person name="Thomas T."/>
            <person name="Williams T.J."/>
            <person name="Egan S."/>
            <person name="Rice S."/>
            <person name="DeMaere M.Z."/>
            <person name="Ting L."/>
            <person name="Ertan H."/>
            <person name="Johnson J."/>
            <person name="Ferriera S."/>
            <person name="Lapidus A."/>
            <person name="Anderson I."/>
            <person name="Kyrpides N."/>
            <person name="Munk A.C."/>
            <person name="Detter C."/>
            <person name="Han C.S."/>
            <person name="Brown M.V."/>
            <person name="Robb F.T."/>
            <person name="Kjelleberg S."/>
            <person name="Cavicchioli R."/>
        </authorList>
    </citation>
    <scope>NUCLEOTIDE SEQUENCE [LARGE SCALE GENOMIC DNA]</scope>
    <source>
        <strain>DSM 13593 / LMG 18877 / RB2256</strain>
    </source>
</reference>
<name>TOLB_SPHAL</name>
<gene>
    <name evidence="1" type="primary">tolB</name>
    <name type="ordered locus">Sala_0328</name>
</gene>
<sequence>MSLRPISLMLALLLTSAPALAQSAPTPPATVQTEPRETIEGTLSQERTVIGIPSFATASVQTVAGLRTDALGRQLADVIAADLERSGLFEPIGPNGVRAIGRAEVQAPRFGEWQARGAENVVHGFVDAGSNGSLIVGCYLYDTALGSELVRKGFEIQPADWRRAAHKCADAIYSRLSGEAPFFDSRVAYIAESGPKGNRIKRLAIMDSDGGNHRFITNGQALALSPRFSPDYKKIVYVSYLNDRVRVFIYDVASGTQRLVTESRNPTFAPRWSPDGTQILYSMAVGGNTDIYRISANGGTPVRLTTAPGIDVGGSFSPDGRKIVFESDRSGSQQLYVMNIDGSNQQRISFGGGRYATPEWSPRGDLIAFTRMGGGEFRIGVMTPSGGGVRMLTNGWQDEAPTWSPNGRVIQFFRTTPGREGRSSLWQVDLTGVNLRRLPTPQDGSDPSWGPVLP</sequence>
<comment type="function">
    <text evidence="1">Part of the Tol-Pal system, which plays a role in outer membrane invagination during cell division and is important for maintaining outer membrane integrity.</text>
</comment>
<comment type="subunit">
    <text evidence="1">The Tol-Pal system is composed of five core proteins: the inner membrane proteins TolA, TolQ and TolR, the periplasmic protein TolB and the outer membrane protein Pal. They form a network linking the inner and outer membranes and the peptidoglycan layer.</text>
</comment>
<comment type="subcellular location">
    <subcellularLocation>
        <location evidence="1">Periplasm</location>
    </subcellularLocation>
</comment>
<comment type="similarity">
    <text evidence="1">Belongs to the TolB family.</text>
</comment>
<organism>
    <name type="scientific">Sphingopyxis alaskensis (strain DSM 13593 / LMG 18877 / RB2256)</name>
    <name type="common">Sphingomonas alaskensis</name>
    <dbReference type="NCBI Taxonomy" id="317655"/>
    <lineage>
        <taxon>Bacteria</taxon>
        <taxon>Pseudomonadati</taxon>
        <taxon>Pseudomonadota</taxon>
        <taxon>Alphaproteobacteria</taxon>
        <taxon>Sphingomonadales</taxon>
        <taxon>Sphingomonadaceae</taxon>
        <taxon>Sphingopyxis</taxon>
    </lineage>
</organism>
<protein>
    <recommendedName>
        <fullName evidence="1">Tol-Pal system protein TolB</fullName>
    </recommendedName>
</protein>
<feature type="signal peptide" evidence="1">
    <location>
        <begin position="1"/>
        <end position="21"/>
    </location>
</feature>
<feature type="chain" id="PRO_0000259093" description="Tol-Pal system protein TolB" evidence="1">
    <location>
        <begin position="22"/>
        <end position="454"/>
    </location>
</feature>
<dbReference type="EMBL" id="CP000356">
    <property type="protein sequence ID" value="ABF52051.1"/>
    <property type="molecule type" value="Genomic_DNA"/>
</dbReference>
<dbReference type="RefSeq" id="WP_011540642.1">
    <property type="nucleotide sequence ID" value="NC_008048.1"/>
</dbReference>
<dbReference type="SMR" id="Q1GWC1"/>
<dbReference type="STRING" id="317655.Sala_0328"/>
<dbReference type="KEGG" id="sal:Sala_0328"/>
<dbReference type="eggNOG" id="COG0823">
    <property type="taxonomic scope" value="Bacteria"/>
</dbReference>
<dbReference type="HOGENOM" id="CLU_047123_0_0_5"/>
<dbReference type="OrthoDB" id="9802240at2"/>
<dbReference type="Proteomes" id="UP000006578">
    <property type="component" value="Chromosome"/>
</dbReference>
<dbReference type="GO" id="GO:0042597">
    <property type="term" value="C:periplasmic space"/>
    <property type="evidence" value="ECO:0007669"/>
    <property type="project" value="UniProtKB-SubCell"/>
</dbReference>
<dbReference type="GO" id="GO:0051301">
    <property type="term" value="P:cell division"/>
    <property type="evidence" value="ECO:0007669"/>
    <property type="project" value="UniProtKB-UniRule"/>
</dbReference>
<dbReference type="GO" id="GO:0017038">
    <property type="term" value="P:protein import"/>
    <property type="evidence" value="ECO:0007669"/>
    <property type="project" value="InterPro"/>
</dbReference>
<dbReference type="Gene3D" id="2.120.10.30">
    <property type="entry name" value="TolB, C-terminal domain"/>
    <property type="match status" value="1"/>
</dbReference>
<dbReference type="Gene3D" id="3.40.50.10070">
    <property type="entry name" value="TolB, N-terminal domain"/>
    <property type="match status" value="1"/>
</dbReference>
<dbReference type="HAMAP" id="MF_00671">
    <property type="entry name" value="TolB"/>
    <property type="match status" value="1"/>
</dbReference>
<dbReference type="InterPro" id="IPR011042">
    <property type="entry name" value="6-blade_b-propeller_TolB-like"/>
</dbReference>
<dbReference type="InterPro" id="IPR011659">
    <property type="entry name" value="PD40"/>
</dbReference>
<dbReference type="InterPro" id="IPR014167">
    <property type="entry name" value="Tol-Pal_TolB"/>
</dbReference>
<dbReference type="InterPro" id="IPR007195">
    <property type="entry name" value="TolB_N"/>
</dbReference>
<dbReference type="NCBIfam" id="TIGR02800">
    <property type="entry name" value="propeller_TolB"/>
    <property type="match status" value="1"/>
</dbReference>
<dbReference type="PANTHER" id="PTHR36842:SF1">
    <property type="entry name" value="PROTEIN TOLB"/>
    <property type="match status" value="1"/>
</dbReference>
<dbReference type="PANTHER" id="PTHR36842">
    <property type="entry name" value="PROTEIN TOLB HOMOLOG"/>
    <property type="match status" value="1"/>
</dbReference>
<dbReference type="Pfam" id="PF07676">
    <property type="entry name" value="PD40"/>
    <property type="match status" value="4"/>
</dbReference>
<dbReference type="Pfam" id="PF04052">
    <property type="entry name" value="TolB_N"/>
    <property type="match status" value="1"/>
</dbReference>
<dbReference type="SUPFAM" id="SSF52964">
    <property type="entry name" value="TolB, N-terminal domain"/>
    <property type="match status" value="1"/>
</dbReference>
<dbReference type="SUPFAM" id="SSF69304">
    <property type="entry name" value="Tricorn protease N-terminal domain"/>
    <property type="match status" value="1"/>
</dbReference>
<accession>Q1GWC1</accession>